<proteinExistence type="inferred from homology"/>
<gene>
    <name type="primary">rpoN</name>
    <name type="synonym">glnF</name>
    <name type="synonym">ntrA</name>
    <name type="ordered locus">STM3320</name>
</gene>
<accession>P26979</accession>
<dbReference type="EMBL" id="M68571">
    <property type="protein sequence ID" value="AAA27224.1"/>
    <property type="molecule type" value="Genomic_DNA"/>
</dbReference>
<dbReference type="EMBL" id="AE006468">
    <property type="protein sequence ID" value="AAL22189.1"/>
    <property type="molecule type" value="Genomic_DNA"/>
</dbReference>
<dbReference type="PIR" id="A41026">
    <property type="entry name" value="A41026"/>
</dbReference>
<dbReference type="RefSeq" id="NP_462230.1">
    <property type="nucleotide sequence ID" value="NC_003197.2"/>
</dbReference>
<dbReference type="RefSeq" id="WP_000809020.1">
    <property type="nucleotide sequence ID" value="NC_003197.2"/>
</dbReference>
<dbReference type="BMRB" id="P26979"/>
<dbReference type="SMR" id="P26979"/>
<dbReference type="MINT" id="P26979"/>
<dbReference type="STRING" id="99287.STM3320"/>
<dbReference type="PaxDb" id="99287-STM3320"/>
<dbReference type="GeneID" id="1254843"/>
<dbReference type="KEGG" id="stm:STM3320"/>
<dbReference type="PATRIC" id="fig|99287.12.peg.3521"/>
<dbReference type="HOGENOM" id="CLU_020569_0_1_6"/>
<dbReference type="OMA" id="VTTQKFM"/>
<dbReference type="PhylomeDB" id="P26979"/>
<dbReference type="BioCyc" id="SENT99287:STM3320-MONOMER"/>
<dbReference type="Proteomes" id="UP000001014">
    <property type="component" value="Chromosome"/>
</dbReference>
<dbReference type="CollecTF" id="EXPREG_000009e0"/>
<dbReference type="GO" id="GO:0000428">
    <property type="term" value="C:DNA-directed RNA polymerase complex"/>
    <property type="evidence" value="ECO:0007669"/>
    <property type="project" value="UniProtKB-KW"/>
</dbReference>
<dbReference type="GO" id="GO:0032993">
    <property type="term" value="C:protein-DNA complex"/>
    <property type="evidence" value="ECO:0000318"/>
    <property type="project" value="GO_Central"/>
</dbReference>
<dbReference type="GO" id="GO:0001216">
    <property type="term" value="F:DNA-binding transcription activator activity"/>
    <property type="evidence" value="ECO:0000318"/>
    <property type="project" value="GO_Central"/>
</dbReference>
<dbReference type="GO" id="GO:0016779">
    <property type="term" value="F:nucleotidyltransferase activity"/>
    <property type="evidence" value="ECO:0007669"/>
    <property type="project" value="UniProtKB-KW"/>
</dbReference>
<dbReference type="GO" id="GO:0016987">
    <property type="term" value="F:sigma factor activity"/>
    <property type="evidence" value="ECO:0007669"/>
    <property type="project" value="UniProtKB-KW"/>
</dbReference>
<dbReference type="GO" id="GO:0000976">
    <property type="term" value="F:transcription cis-regulatory region binding"/>
    <property type="evidence" value="ECO:0000318"/>
    <property type="project" value="GO_Central"/>
</dbReference>
<dbReference type="GO" id="GO:0006525">
    <property type="term" value="P:arginine metabolic process"/>
    <property type="evidence" value="ECO:0007669"/>
    <property type="project" value="UniProtKB-KW"/>
</dbReference>
<dbReference type="GO" id="GO:0006352">
    <property type="term" value="P:DNA-templated transcription initiation"/>
    <property type="evidence" value="ECO:0007669"/>
    <property type="project" value="InterPro"/>
</dbReference>
<dbReference type="GO" id="GO:0006355">
    <property type="term" value="P:regulation of DNA-templated transcription"/>
    <property type="evidence" value="ECO:0000318"/>
    <property type="project" value="GO_Central"/>
</dbReference>
<dbReference type="FunFam" id="1.10.10.1330:FF:000001">
    <property type="entry name" value="RNA polymerase sigma-54 factor"/>
    <property type="match status" value="1"/>
</dbReference>
<dbReference type="FunFam" id="1.10.10.60:FF:000045">
    <property type="entry name" value="RNA polymerase sigma-54 factor"/>
    <property type="match status" value="1"/>
</dbReference>
<dbReference type="Gene3D" id="1.10.10.60">
    <property type="entry name" value="Homeodomain-like"/>
    <property type="match status" value="1"/>
</dbReference>
<dbReference type="Gene3D" id="1.10.10.1330">
    <property type="entry name" value="RNA polymerase sigma-54 factor, core-binding domain"/>
    <property type="match status" value="1"/>
</dbReference>
<dbReference type="InterPro" id="IPR000394">
    <property type="entry name" value="RNA_pol_sigma_54"/>
</dbReference>
<dbReference type="InterPro" id="IPR007046">
    <property type="entry name" value="RNA_pol_sigma_54_core-bd"/>
</dbReference>
<dbReference type="InterPro" id="IPR007634">
    <property type="entry name" value="RNA_pol_sigma_54_DNA-bd"/>
</dbReference>
<dbReference type="InterPro" id="IPR038709">
    <property type="entry name" value="RpoN_core-bd_sf"/>
</dbReference>
<dbReference type="NCBIfam" id="NF004595">
    <property type="entry name" value="PRK05932.1-2"/>
    <property type="match status" value="1"/>
</dbReference>
<dbReference type="NCBIfam" id="NF004597">
    <property type="entry name" value="PRK05932.1-4"/>
    <property type="match status" value="1"/>
</dbReference>
<dbReference type="NCBIfam" id="NF009118">
    <property type="entry name" value="PRK12469.1"/>
    <property type="match status" value="1"/>
</dbReference>
<dbReference type="NCBIfam" id="TIGR02395">
    <property type="entry name" value="rpoN_sigma"/>
    <property type="match status" value="1"/>
</dbReference>
<dbReference type="PANTHER" id="PTHR32248">
    <property type="entry name" value="RNA POLYMERASE SIGMA-54 FACTOR"/>
    <property type="match status" value="1"/>
</dbReference>
<dbReference type="PANTHER" id="PTHR32248:SF4">
    <property type="entry name" value="RNA POLYMERASE SIGMA-54 FACTOR"/>
    <property type="match status" value="1"/>
</dbReference>
<dbReference type="Pfam" id="PF00309">
    <property type="entry name" value="Sigma54_AID"/>
    <property type="match status" value="1"/>
</dbReference>
<dbReference type="Pfam" id="PF04963">
    <property type="entry name" value="Sigma54_CBD"/>
    <property type="match status" value="1"/>
</dbReference>
<dbReference type="Pfam" id="PF04552">
    <property type="entry name" value="Sigma54_DBD"/>
    <property type="match status" value="1"/>
</dbReference>
<dbReference type="PIRSF" id="PIRSF000774">
    <property type="entry name" value="RpoN"/>
    <property type="match status" value="1"/>
</dbReference>
<dbReference type="PRINTS" id="PR00045">
    <property type="entry name" value="SIGMA54FCT"/>
</dbReference>
<dbReference type="PROSITE" id="PS00717">
    <property type="entry name" value="SIGMA54_1"/>
    <property type="match status" value="1"/>
</dbReference>
<dbReference type="PROSITE" id="PS00718">
    <property type="entry name" value="SIGMA54_2"/>
    <property type="match status" value="1"/>
</dbReference>
<dbReference type="PROSITE" id="PS50044">
    <property type="entry name" value="SIGMA54_3"/>
    <property type="match status" value="1"/>
</dbReference>
<feature type="chain" id="PRO_0000205530" description="RNA polymerase sigma-54 factor">
    <location>
        <begin position="1"/>
        <end position="477"/>
    </location>
</feature>
<feature type="DNA-binding region" description="H-T-H motif" evidence="1">
    <location>
        <begin position="366"/>
        <end position="385"/>
    </location>
</feature>
<feature type="short sequence motif" description="RPON box">
    <location>
        <begin position="454"/>
        <end position="462"/>
    </location>
</feature>
<reference key="1">
    <citation type="journal article" date="1991" name="J. Biol. Chem.">
        <title>Purification of the alternative sigma factor, sigma 54, from Salmonella typhimurium and characterization of sigma 54-holoenzyme.</title>
        <authorList>
            <person name="Popham D.L."/>
            <person name="Keener J."/>
            <person name="Kustu S."/>
        </authorList>
    </citation>
    <scope>NUCLEOTIDE SEQUENCE [GENOMIC DNA]</scope>
</reference>
<reference key="2">
    <citation type="journal article" date="2001" name="Nature">
        <title>Complete genome sequence of Salmonella enterica serovar Typhimurium LT2.</title>
        <authorList>
            <person name="McClelland M."/>
            <person name="Sanderson K.E."/>
            <person name="Spieth J."/>
            <person name="Clifton S.W."/>
            <person name="Latreille P."/>
            <person name="Courtney L."/>
            <person name="Porwollik S."/>
            <person name="Ali J."/>
            <person name="Dante M."/>
            <person name="Du F."/>
            <person name="Hou S."/>
            <person name="Layman D."/>
            <person name="Leonard S."/>
            <person name="Nguyen C."/>
            <person name="Scott K."/>
            <person name="Holmes A."/>
            <person name="Grewal N."/>
            <person name="Mulvaney E."/>
            <person name="Ryan E."/>
            <person name="Sun H."/>
            <person name="Florea L."/>
            <person name="Miller W."/>
            <person name="Stoneking T."/>
            <person name="Nhan M."/>
            <person name="Waterston R."/>
            <person name="Wilson R.K."/>
        </authorList>
    </citation>
    <scope>NUCLEOTIDE SEQUENCE [LARGE SCALE GENOMIC DNA]</scope>
    <source>
        <strain>LT2 / SGSC1412 / ATCC 700720</strain>
    </source>
</reference>
<sequence length="477" mass="53988">MKQGLQLRLSQQLAMTPQLQQAIRLLQLSTLELQQELQQALENNPLLEQTDLHDEIDTQQPQDNDPLDTADALEQKEMPEELPLDASWDEIYTAGTPSGPSGDYIDDELPVYQGETTQSLQDYLMWQVELTPFSDTDRAIATSIVDAVDDTGYLTVSLDEIRESMGDVEVDLDEVEAVLKRIQRFDPVGVAAKDLRDCLLIQLSQFDKSTPWLEEARLIICDHLDLLANHDFRTLMRVTRLKEEVLKEAVNLIQSLDPRPGQSIQTGEPEYVIPDVLVRKHNGRWTVELNSDSIPRLQINQHYAAMCNSARNDADSQFIRSNLQDAKWLIKSLESRNDTLLRVSRCIVEQQQAFFEQGEEYMKPMVLADIAQAVEMHESTISRVTTQKYLHSPRGIFELKYFFSSHVNTEGGGEASSTAIRALVKKLIAAENPAKPLSDSKLTSLLSEQGIMVARRTVAKYRESLSIPPSNQRKQLV</sequence>
<organism>
    <name type="scientific">Salmonella typhimurium (strain LT2 / SGSC1412 / ATCC 700720)</name>
    <dbReference type="NCBI Taxonomy" id="99287"/>
    <lineage>
        <taxon>Bacteria</taxon>
        <taxon>Pseudomonadati</taxon>
        <taxon>Pseudomonadota</taxon>
        <taxon>Gammaproteobacteria</taxon>
        <taxon>Enterobacterales</taxon>
        <taxon>Enterobacteriaceae</taxon>
        <taxon>Salmonella</taxon>
    </lineage>
</organism>
<name>RP54_SALTY</name>
<comment type="function">
    <text>Sigma factors are initiation factors that promote the attachment of RNA polymerase to specific initiation sites and are then released. This sigma factor is responsible for the expression of enzymes involved in arginine catabolism. The open complex (sigma-54 and core RNA polymerase) serves as the receptor for the receipt of the melting signal from the remotely bound activator protein GlnG(NtrC).</text>
</comment>
<comment type="similarity">
    <text evidence="2">Belongs to the sigma-54 factor family.</text>
</comment>
<evidence type="ECO:0000250" key="1"/>
<evidence type="ECO:0000305" key="2"/>
<protein>
    <recommendedName>
        <fullName>RNA polymerase sigma-54 factor</fullName>
    </recommendedName>
</protein>
<keyword id="KW-0056">Arginine metabolism</keyword>
<keyword id="KW-0238">DNA-binding</keyword>
<keyword id="KW-0240">DNA-directed RNA polymerase</keyword>
<keyword id="KW-0548">Nucleotidyltransferase</keyword>
<keyword id="KW-1185">Reference proteome</keyword>
<keyword id="KW-0731">Sigma factor</keyword>
<keyword id="KW-0804">Transcription</keyword>
<keyword id="KW-0805">Transcription regulation</keyword>
<keyword id="KW-0808">Transferase</keyword>